<feature type="chain" id="PRO_1000147303" description="Nucleotide-binding protein YajQ">
    <location>
        <begin position="1"/>
        <end position="163"/>
    </location>
</feature>
<reference key="1">
    <citation type="journal article" date="2009" name="J. Bacteriol.">
        <title>Complete genome sequence and comparative genome analysis of enteropathogenic Escherichia coli O127:H6 strain E2348/69.</title>
        <authorList>
            <person name="Iguchi A."/>
            <person name="Thomson N.R."/>
            <person name="Ogura Y."/>
            <person name="Saunders D."/>
            <person name="Ooka T."/>
            <person name="Henderson I.R."/>
            <person name="Harris D."/>
            <person name="Asadulghani M."/>
            <person name="Kurokawa K."/>
            <person name="Dean P."/>
            <person name="Kenny B."/>
            <person name="Quail M.A."/>
            <person name="Thurston S."/>
            <person name="Dougan G."/>
            <person name="Hayashi T."/>
            <person name="Parkhill J."/>
            <person name="Frankel G."/>
        </authorList>
    </citation>
    <scope>NUCLEOTIDE SEQUENCE [LARGE SCALE GENOMIC DNA]</scope>
    <source>
        <strain>E2348/69 / EPEC</strain>
    </source>
</reference>
<organism>
    <name type="scientific">Escherichia coli O127:H6 (strain E2348/69 / EPEC)</name>
    <dbReference type="NCBI Taxonomy" id="574521"/>
    <lineage>
        <taxon>Bacteria</taxon>
        <taxon>Pseudomonadati</taxon>
        <taxon>Pseudomonadota</taxon>
        <taxon>Gammaproteobacteria</taxon>
        <taxon>Enterobacterales</taxon>
        <taxon>Enterobacteriaceae</taxon>
        <taxon>Escherichia</taxon>
    </lineage>
</organism>
<comment type="function">
    <text evidence="1">Nucleotide-binding protein.</text>
</comment>
<comment type="similarity">
    <text evidence="1">Belongs to the YajQ family.</text>
</comment>
<proteinExistence type="inferred from homology"/>
<gene>
    <name evidence="1" type="primary">yajQ</name>
    <name type="ordered locus">E2348C_0361</name>
</gene>
<accession>B7UJP9</accession>
<sequence length="163" mass="18312">MPSFDIVSEVDLQEARNAVDNASREVESRFDFRNVEASFELNDASKTIKVLSESDFQVNQLLDILRAKLLKRGIEGSSLDVPENIVHSGKTWFVEAKLKQGIESATQKKIVKMIKDSKLKVQAQIQGDEIRVTGKSRDDLQAVMAVVRGGDLGQPFQFKNFRD</sequence>
<name>YAJQ_ECO27</name>
<protein>
    <recommendedName>
        <fullName evidence="1">Nucleotide-binding protein YajQ</fullName>
    </recommendedName>
</protein>
<dbReference type="EMBL" id="FM180568">
    <property type="protein sequence ID" value="CAS07909.1"/>
    <property type="molecule type" value="Genomic_DNA"/>
</dbReference>
<dbReference type="RefSeq" id="WP_001138906.1">
    <property type="nucleotide sequence ID" value="NC_011601.1"/>
</dbReference>
<dbReference type="SMR" id="B7UJP9"/>
<dbReference type="KEGG" id="ecg:E2348C_0361"/>
<dbReference type="HOGENOM" id="CLU_099839_1_0_6"/>
<dbReference type="Proteomes" id="UP000008205">
    <property type="component" value="Chromosome"/>
</dbReference>
<dbReference type="GO" id="GO:0005829">
    <property type="term" value="C:cytosol"/>
    <property type="evidence" value="ECO:0007669"/>
    <property type="project" value="TreeGrafter"/>
</dbReference>
<dbReference type="GO" id="GO:0000166">
    <property type="term" value="F:nucleotide binding"/>
    <property type="evidence" value="ECO:0007669"/>
    <property type="project" value="TreeGrafter"/>
</dbReference>
<dbReference type="CDD" id="cd11740">
    <property type="entry name" value="YajQ_like"/>
    <property type="match status" value="1"/>
</dbReference>
<dbReference type="FunFam" id="3.30.70.860:FF:000001">
    <property type="entry name" value="UPF0234 protein YajQ"/>
    <property type="match status" value="1"/>
</dbReference>
<dbReference type="FunFam" id="3.30.70.990:FF:000001">
    <property type="entry name" value="UPF0234 protein YajQ"/>
    <property type="match status" value="1"/>
</dbReference>
<dbReference type="Gene3D" id="3.30.70.860">
    <property type="match status" value="1"/>
</dbReference>
<dbReference type="Gene3D" id="3.30.70.990">
    <property type="entry name" value="YajQ-like, domain 2"/>
    <property type="match status" value="1"/>
</dbReference>
<dbReference type="HAMAP" id="MF_00632">
    <property type="entry name" value="YajQ"/>
    <property type="match status" value="1"/>
</dbReference>
<dbReference type="InterPro" id="IPR007551">
    <property type="entry name" value="DUF520"/>
</dbReference>
<dbReference type="InterPro" id="IPR035571">
    <property type="entry name" value="UPF0234-like_C"/>
</dbReference>
<dbReference type="InterPro" id="IPR035570">
    <property type="entry name" value="UPF0234_N"/>
</dbReference>
<dbReference type="InterPro" id="IPR036183">
    <property type="entry name" value="YajQ-like_sf"/>
</dbReference>
<dbReference type="NCBIfam" id="NF003819">
    <property type="entry name" value="PRK05412.1"/>
    <property type="match status" value="1"/>
</dbReference>
<dbReference type="PANTHER" id="PTHR30476">
    <property type="entry name" value="UPF0234 PROTEIN YAJQ"/>
    <property type="match status" value="1"/>
</dbReference>
<dbReference type="PANTHER" id="PTHR30476:SF0">
    <property type="entry name" value="UPF0234 PROTEIN YAJQ"/>
    <property type="match status" value="1"/>
</dbReference>
<dbReference type="Pfam" id="PF04461">
    <property type="entry name" value="DUF520"/>
    <property type="match status" value="1"/>
</dbReference>
<dbReference type="SUPFAM" id="SSF89963">
    <property type="entry name" value="YajQ-like"/>
    <property type="match status" value="2"/>
</dbReference>
<keyword id="KW-0547">Nucleotide-binding</keyword>
<keyword id="KW-1185">Reference proteome</keyword>
<evidence type="ECO:0000255" key="1">
    <source>
        <dbReference type="HAMAP-Rule" id="MF_00632"/>
    </source>
</evidence>